<keyword id="KW-0143">Chaperone</keyword>
<keyword id="KW-0963">Cytoplasm</keyword>
<keyword id="KW-0690">Ribosome biogenesis</keyword>
<keyword id="KW-0698">rRNA processing</keyword>
<accession>B0CIR9</accession>
<sequence length="189" mass="20554">MPRPENPIQLAVIGAAHGTRGEVRVKTFTGDPLAIADYGLLYDEQGKAYEILEARVAKTVVIVRFKGVNDRNAAEALNGTELFIDRSQLPDEELDEDEFFQTDLIGLEAVDGDGKSYGVVSAIFDFGGGDLIELSEKGKRPMLIPFTEAAVPEIDFDKGIIKVEPHAAGLIADEHDNPPHESGKKPKKP</sequence>
<reference key="1">
    <citation type="submission" date="2007-12" db="EMBL/GenBank/DDBJ databases">
        <title>Brucella suis ATCC 23445 whole genome shotgun sequencing project.</title>
        <authorList>
            <person name="Setubal J.C."/>
            <person name="Bowns C."/>
            <person name="Boyle S."/>
            <person name="Crasta O.R."/>
            <person name="Czar M.J."/>
            <person name="Dharmanolla C."/>
            <person name="Gillespie J.J."/>
            <person name="Kenyon R.W."/>
            <person name="Lu J."/>
            <person name="Mane S."/>
            <person name="Mohapatra S."/>
            <person name="Nagrani S."/>
            <person name="Purkayastha A."/>
            <person name="Rajasimha H.K."/>
            <person name="Shallom J.M."/>
            <person name="Shallom S."/>
            <person name="Shukla M."/>
            <person name="Snyder E.E."/>
            <person name="Sobral B.W."/>
            <person name="Wattam A.R."/>
            <person name="Will R."/>
            <person name="Williams K."/>
            <person name="Yoo H."/>
            <person name="Bruce D."/>
            <person name="Detter C."/>
            <person name="Munk C."/>
            <person name="Brettin T.S."/>
        </authorList>
    </citation>
    <scope>NUCLEOTIDE SEQUENCE [LARGE SCALE GENOMIC DNA]</scope>
    <source>
        <strain>ATCC 23445 / NCTC 10510</strain>
    </source>
</reference>
<name>RIMM_BRUSI</name>
<evidence type="ECO:0000255" key="1">
    <source>
        <dbReference type="HAMAP-Rule" id="MF_00014"/>
    </source>
</evidence>
<evidence type="ECO:0000256" key="2">
    <source>
        <dbReference type="SAM" id="MobiDB-lite"/>
    </source>
</evidence>
<protein>
    <recommendedName>
        <fullName evidence="1">Ribosome maturation factor RimM</fullName>
    </recommendedName>
</protein>
<comment type="function">
    <text evidence="1">An accessory protein needed during the final step in the assembly of 30S ribosomal subunit, possibly for assembly of the head region. Essential for efficient processing of 16S rRNA. May be needed both before and after RbfA during the maturation of 16S rRNA. It has affinity for free ribosomal 30S subunits but not for 70S ribosomes.</text>
</comment>
<comment type="subunit">
    <text evidence="1">Binds ribosomal protein uS19.</text>
</comment>
<comment type="subcellular location">
    <subcellularLocation>
        <location evidence="1">Cytoplasm</location>
    </subcellularLocation>
</comment>
<comment type="domain">
    <text evidence="1">The PRC barrel domain binds ribosomal protein uS19.</text>
</comment>
<comment type="similarity">
    <text evidence="1">Belongs to the RimM family.</text>
</comment>
<proteinExistence type="inferred from homology"/>
<feature type="chain" id="PRO_1000074021" description="Ribosome maturation factor RimM">
    <location>
        <begin position="1"/>
        <end position="189"/>
    </location>
</feature>
<feature type="domain" description="PRC barrel" evidence="1">
    <location>
        <begin position="96"/>
        <end position="169"/>
    </location>
</feature>
<feature type="region of interest" description="Disordered" evidence="2">
    <location>
        <begin position="168"/>
        <end position="189"/>
    </location>
</feature>
<feature type="compositionally biased region" description="Basic and acidic residues" evidence="2">
    <location>
        <begin position="172"/>
        <end position="189"/>
    </location>
</feature>
<organism>
    <name type="scientific">Brucella suis (strain ATCC 23445 / NCTC 10510)</name>
    <dbReference type="NCBI Taxonomy" id="470137"/>
    <lineage>
        <taxon>Bacteria</taxon>
        <taxon>Pseudomonadati</taxon>
        <taxon>Pseudomonadota</taxon>
        <taxon>Alphaproteobacteria</taxon>
        <taxon>Hyphomicrobiales</taxon>
        <taxon>Brucellaceae</taxon>
        <taxon>Brucella/Ochrobactrum group</taxon>
        <taxon>Brucella</taxon>
    </lineage>
</organism>
<gene>
    <name evidence="1" type="primary">rimM</name>
    <name type="ordered locus">BSUIS_A1755</name>
</gene>
<dbReference type="EMBL" id="CP000911">
    <property type="protein sequence ID" value="ABY38772.1"/>
    <property type="molecule type" value="Genomic_DNA"/>
</dbReference>
<dbReference type="RefSeq" id="WP_002964983.1">
    <property type="nucleotide sequence ID" value="NC_010169.1"/>
</dbReference>
<dbReference type="SMR" id="B0CIR9"/>
<dbReference type="GeneID" id="93017753"/>
<dbReference type="KEGG" id="bmt:BSUIS_A1755"/>
<dbReference type="HOGENOM" id="CLU_077636_0_1_5"/>
<dbReference type="Proteomes" id="UP000008545">
    <property type="component" value="Chromosome I"/>
</dbReference>
<dbReference type="GO" id="GO:0005737">
    <property type="term" value="C:cytoplasm"/>
    <property type="evidence" value="ECO:0007669"/>
    <property type="project" value="UniProtKB-SubCell"/>
</dbReference>
<dbReference type="GO" id="GO:0005840">
    <property type="term" value="C:ribosome"/>
    <property type="evidence" value="ECO:0007669"/>
    <property type="project" value="InterPro"/>
</dbReference>
<dbReference type="GO" id="GO:0043022">
    <property type="term" value="F:ribosome binding"/>
    <property type="evidence" value="ECO:0007669"/>
    <property type="project" value="InterPro"/>
</dbReference>
<dbReference type="GO" id="GO:0042274">
    <property type="term" value="P:ribosomal small subunit biogenesis"/>
    <property type="evidence" value="ECO:0007669"/>
    <property type="project" value="UniProtKB-UniRule"/>
</dbReference>
<dbReference type="GO" id="GO:0006364">
    <property type="term" value="P:rRNA processing"/>
    <property type="evidence" value="ECO:0007669"/>
    <property type="project" value="UniProtKB-UniRule"/>
</dbReference>
<dbReference type="Gene3D" id="2.30.30.240">
    <property type="entry name" value="PRC-barrel domain"/>
    <property type="match status" value="1"/>
</dbReference>
<dbReference type="Gene3D" id="2.40.30.60">
    <property type="entry name" value="RimM"/>
    <property type="match status" value="1"/>
</dbReference>
<dbReference type="HAMAP" id="MF_00014">
    <property type="entry name" value="Ribosome_mat_RimM"/>
    <property type="match status" value="1"/>
</dbReference>
<dbReference type="InterPro" id="IPR011033">
    <property type="entry name" value="PRC_barrel-like_sf"/>
</dbReference>
<dbReference type="InterPro" id="IPR056792">
    <property type="entry name" value="PRC_RimM"/>
</dbReference>
<dbReference type="InterPro" id="IPR011961">
    <property type="entry name" value="RimM"/>
</dbReference>
<dbReference type="InterPro" id="IPR002676">
    <property type="entry name" value="RimM_N"/>
</dbReference>
<dbReference type="InterPro" id="IPR036976">
    <property type="entry name" value="RimM_N_sf"/>
</dbReference>
<dbReference type="InterPro" id="IPR009000">
    <property type="entry name" value="Transl_B-barrel_sf"/>
</dbReference>
<dbReference type="NCBIfam" id="TIGR02273">
    <property type="entry name" value="16S_RimM"/>
    <property type="match status" value="1"/>
</dbReference>
<dbReference type="PANTHER" id="PTHR33692">
    <property type="entry name" value="RIBOSOME MATURATION FACTOR RIMM"/>
    <property type="match status" value="1"/>
</dbReference>
<dbReference type="PANTHER" id="PTHR33692:SF1">
    <property type="entry name" value="RIBOSOME MATURATION FACTOR RIMM"/>
    <property type="match status" value="1"/>
</dbReference>
<dbReference type="Pfam" id="PF24986">
    <property type="entry name" value="PRC_RimM"/>
    <property type="match status" value="1"/>
</dbReference>
<dbReference type="Pfam" id="PF01782">
    <property type="entry name" value="RimM"/>
    <property type="match status" value="1"/>
</dbReference>
<dbReference type="SUPFAM" id="SSF50346">
    <property type="entry name" value="PRC-barrel domain"/>
    <property type="match status" value="1"/>
</dbReference>
<dbReference type="SUPFAM" id="SSF50447">
    <property type="entry name" value="Translation proteins"/>
    <property type="match status" value="1"/>
</dbReference>